<name>DAPF_CORGL</name>
<dbReference type="EC" id="5.1.1.7" evidence="2"/>
<dbReference type="EMBL" id="BA000036">
    <property type="protein sequence ID" value="BAB99336.1"/>
    <property type="molecule type" value="Genomic_DNA"/>
</dbReference>
<dbReference type="EMBL" id="BX927153">
    <property type="protein sequence ID" value="CAF20284.1"/>
    <property type="molecule type" value="Genomic_DNA"/>
</dbReference>
<dbReference type="RefSeq" id="NP_601150.1">
    <property type="nucleotide sequence ID" value="NC_003450.3"/>
</dbReference>
<dbReference type="RefSeq" id="WP_011014772.1">
    <property type="nucleotide sequence ID" value="NC_006958.1"/>
</dbReference>
<dbReference type="PDB" id="5H2G">
    <property type="method" value="X-ray"/>
    <property type="resolution" value="2.00 A"/>
    <property type="chains" value="A/B=1-277"/>
</dbReference>
<dbReference type="PDB" id="5H2Y">
    <property type="method" value="X-ray"/>
    <property type="resolution" value="2.00 A"/>
    <property type="chains" value="A/B=1-277"/>
</dbReference>
<dbReference type="PDB" id="5M47">
    <property type="method" value="X-ray"/>
    <property type="resolution" value="2.59 A"/>
    <property type="chains" value="A=1-277"/>
</dbReference>
<dbReference type="PDBsum" id="5H2G"/>
<dbReference type="PDBsum" id="5H2Y"/>
<dbReference type="PDBsum" id="5M47"/>
<dbReference type="SMR" id="Q8NP73"/>
<dbReference type="STRING" id="196627.cg2129"/>
<dbReference type="GeneID" id="1019900"/>
<dbReference type="KEGG" id="cgb:cg2129"/>
<dbReference type="KEGG" id="cgl:Cgl1943"/>
<dbReference type="PATRIC" id="fig|196627.13.peg.1881"/>
<dbReference type="eggNOG" id="COG0253">
    <property type="taxonomic scope" value="Bacteria"/>
</dbReference>
<dbReference type="HOGENOM" id="CLU_053306_4_0_11"/>
<dbReference type="OrthoDB" id="9805408at2"/>
<dbReference type="BioCyc" id="CORYNE:G18NG-11535-MONOMER"/>
<dbReference type="BRENDA" id="5.1.1.7">
    <property type="organism ID" value="960"/>
</dbReference>
<dbReference type="UniPathway" id="UPA00034">
    <property type="reaction ID" value="UER00025"/>
</dbReference>
<dbReference type="Proteomes" id="UP000000582">
    <property type="component" value="Chromosome"/>
</dbReference>
<dbReference type="Proteomes" id="UP000001009">
    <property type="component" value="Chromosome"/>
</dbReference>
<dbReference type="GO" id="GO:0005829">
    <property type="term" value="C:cytosol"/>
    <property type="evidence" value="ECO:0007669"/>
    <property type="project" value="TreeGrafter"/>
</dbReference>
<dbReference type="GO" id="GO:0008837">
    <property type="term" value="F:diaminopimelate epimerase activity"/>
    <property type="evidence" value="ECO:0007669"/>
    <property type="project" value="UniProtKB-UniRule"/>
</dbReference>
<dbReference type="GO" id="GO:0009089">
    <property type="term" value="P:lysine biosynthetic process via diaminopimelate"/>
    <property type="evidence" value="ECO:0007669"/>
    <property type="project" value="UniProtKB-UniRule"/>
</dbReference>
<dbReference type="Gene3D" id="3.10.310.10">
    <property type="entry name" value="Diaminopimelate Epimerase, Chain A, domain 1"/>
    <property type="match status" value="2"/>
</dbReference>
<dbReference type="HAMAP" id="MF_00197">
    <property type="entry name" value="DAP_epimerase"/>
    <property type="match status" value="1"/>
</dbReference>
<dbReference type="InterPro" id="IPR018510">
    <property type="entry name" value="DAP_epimerase_AS"/>
</dbReference>
<dbReference type="InterPro" id="IPR001653">
    <property type="entry name" value="DAP_epimerase_DapF"/>
</dbReference>
<dbReference type="NCBIfam" id="TIGR00652">
    <property type="entry name" value="DapF"/>
    <property type="match status" value="1"/>
</dbReference>
<dbReference type="PANTHER" id="PTHR31689:SF0">
    <property type="entry name" value="DIAMINOPIMELATE EPIMERASE"/>
    <property type="match status" value="1"/>
</dbReference>
<dbReference type="PANTHER" id="PTHR31689">
    <property type="entry name" value="DIAMINOPIMELATE EPIMERASE, CHLOROPLASTIC"/>
    <property type="match status" value="1"/>
</dbReference>
<dbReference type="Pfam" id="PF01678">
    <property type="entry name" value="DAP_epimerase"/>
    <property type="match status" value="2"/>
</dbReference>
<dbReference type="SUPFAM" id="SSF54506">
    <property type="entry name" value="Diaminopimelate epimerase-like"/>
    <property type="match status" value="2"/>
</dbReference>
<dbReference type="PROSITE" id="PS01326">
    <property type="entry name" value="DAP_EPIMERASE"/>
    <property type="match status" value="1"/>
</dbReference>
<keyword id="KW-0002">3D-structure</keyword>
<keyword id="KW-0028">Amino-acid biosynthesis</keyword>
<keyword id="KW-0963">Cytoplasm</keyword>
<keyword id="KW-0413">Isomerase</keyword>
<keyword id="KW-0457">Lysine biosynthesis</keyword>
<keyword id="KW-1185">Reference proteome</keyword>
<sequence length="277" mass="29203">MNLTIPFAKGHATENDFIIIPDEDARLDLTPEMVVTLCDRRAGIGADGILRVVKAADVEGSTVDPSLWFMDYRNADGSLAEMCGNGVRLFAHWLYSRGLVDNTSFDIGTRAGVRHVDILQADQHSAQVRVDMGIPDVTGLSTCDINGQVFAGLGVDMGNPHLACVVPGLSASALADMELRAPTFDQEFFPHGVNVEIVTELEDDAVSMRVWERGVGETRSCGTGTVAAACAALADAGLGEGTVKVCVPGGEVEVQIFDDGSTLTGPSAIIALGEVQI</sequence>
<accession>Q8NP73</accession>
<feature type="chain" id="PRO_0000149837" description="Diaminopimelate epimerase">
    <location>
        <begin position="1"/>
        <end position="277"/>
    </location>
</feature>
<feature type="active site" description="Proton donor" evidence="6 7">
    <location>
        <position position="83"/>
    </location>
</feature>
<feature type="active site" description="Proton acceptor" evidence="1">
    <location>
        <position position="221"/>
    </location>
</feature>
<feature type="binding site" evidence="3 7">
    <location>
        <position position="15"/>
    </location>
    <ligand>
        <name>substrate</name>
    </ligand>
</feature>
<feature type="binding site" evidence="1">
    <location>
        <position position="74"/>
    </location>
    <ligand>
        <name>substrate</name>
    </ligand>
</feature>
<feature type="binding site" evidence="3 7">
    <location>
        <begin position="84"/>
        <end position="85"/>
    </location>
    <ligand>
        <name>substrate</name>
    </ligand>
</feature>
<feature type="binding site" evidence="3 7">
    <location>
        <position position="159"/>
    </location>
    <ligand>
        <name>substrate</name>
    </ligand>
</feature>
<feature type="binding site" evidence="3 7">
    <location>
        <position position="194"/>
    </location>
    <ligand>
        <name>substrate</name>
    </ligand>
</feature>
<feature type="binding site" evidence="3 7">
    <location>
        <begin position="212"/>
        <end position="213"/>
    </location>
    <ligand>
        <name>substrate</name>
    </ligand>
</feature>
<feature type="binding site" evidence="3 7">
    <location>
        <begin position="222"/>
        <end position="223"/>
    </location>
    <ligand>
        <name>substrate</name>
    </ligand>
</feature>
<feature type="site" description="Could be important to modulate the pK values of the two catalytic cysteine residues" evidence="1">
    <location>
        <position position="161"/>
    </location>
</feature>
<feature type="site" description="Could be important to modulate the pK values of the two catalytic cysteine residues" evidence="1">
    <location>
        <position position="212"/>
    </location>
</feature>
<feature type="strand" evidence="8">
    <location>
        <begin position="3"/>
        <end position="12"/>
    </location>
</feature>
<feature type="strand" evidence="8">
    <location>
        <begin position="15"/>
        <end position="21"/>
    </location>
</feature>
<feature type="helix" evidence="8">
    <location>
        <begin position="31"/>
        <end position="38"/>
    </location>
</feature>
<feature type="turn" evidence="8">
    <location>
        <begin position="40"/>
        <end position="42"/>
    </location>
</feature>
<feature type="strand" evidence="8">
    <location>
        <begin position="47"/>
        <end position="54"/>
    </location>
</feature>
<feature type="helix" evidence="8">
    <location>
        <begin position="55"/>
        <end position="57"/>
    </location>
</feature>
<feature type="strand" evidence="8">
    <location>
        <begin position="67"/>
        <end position="74"/>
    </location>
</feature>
<feature type="helix" evidence="8">
    <location>
        <begin position="86"/>
        <end position="96"/>
    </location>
</feature>
<feature type="strand" evidence="8">
    <location>
        <begin position="99"/>
        <end position="108"/>
    </location>
</feature>
<feature type="strand" evidence="8">
    <location>
        <begin position="114"/>
        <end position="121"/>
    </location>
</feature>
<feature type="strand" evidence="8">
    <location>
        <begin position="123"/>
        <end position="131"/>
    </location>
</feature>
<feature type="strand" evidence="8">
    <location>
        <begin position="136"/>
        <end position="145"/>
    </location>
</feature>
<feature type="strand" evidence="8">
    <location>
        <begin position="148"/>
        <end position="165"/>
    </location>
</feature>
<feature type="helix" evidence="8">
    <location>
        <begin position="171"/>
        <end position="176"/>
    </location>
</feature>
<feature type="turn" evidence="8">
    <location>
        <begin position="186"/>
        <end position="188"/>
    </location>
</feature>
<feature type="strand" evidence="8">
    <location>
        <begin position="194"/>
        <end position="198"/>
    </location>
</feature>
<feature type="strand" evidence="8">
    <location>
        <begin position="205"/>
        <end position="212"/>
    </location>
</feature>
<feature type="turn" evidence="8">
    <location>
        <begin position="213"/>
        <end position="215"/>
    </location>
</feature>
<feature type="helix" evidence="8">
    <location>
        <begin position="222"/>
        <end position="235"/>
    </location>
</feature>
<feature type="strand" evidence="8">
    <location>
        <begin position="239"/>
        <end position="247"/>
    </location>
</feature>
<feature type="strand" evidence="8">
    <location>
        <begin position="250"/>
        <end position="257"/>
    </location>
</feature>
<feature type="strand" evidence="8">
    <location>
        <begin position="260"/>
        <end position="277"/>
    </location>
</feature>
<protein>
    <recommendedName>
        <fullName evidence="4">Diaminopimelate epimerase</fullName>
        <shortName evidence="4">DAP epimerase</shortName>
        <ecNumber evidence="2">5.1.1.7</ecNumber>
    </recommendedName>
    <alternativeName>
        <fullName evidence="4">PLP-independent amino acid racemase</fullName>
    </alternativeName>
</protein>
<proteinExistence type="evidence at protein level"/>
<reference key="1">
    <citation type="journal article" date="2003" name="Appl. Microbiol. Biotechnol.">
        <title>The Corynebacterium glutamicum genome: features and impacts on biotechnological processes.</title>
        <authorList>
            <person name="Ikeda M."/>
            <person name="Nakagawa S."/>
        </authorList>
    </citation>
    <scope>NUCLEOTIDE SEQUENCE [LARGE SCALE GENOMIC DNA]</scope>
    <source>
        <strain>ATCC 13032 / DSM 20300 / JCM 1318 / BCRC 11384 / CCUG 27702 / LMG 3730 / NBRC 12168 / NCIMB 10025 / NRRL B-2784 / 534</strain>
    </source>
</reference>
<reference key="2">
    <citation type="journal article" date="2003" name="J. Biotechnol.">
        <title>The complete Corynebacterium glutamicum ATCC 13032 genome sequence and its impact on the production of L-aspartate-derived amino acids and vitamins.</title>
        <authorList>
            <person name="Kalinowski J."/>
            <person name="Bathe B."/>
            <person name="Bartels D."/>
            <person name="Bischoff N."/>
            <person name="Bott M."/>
            <person name="Burkovski A."/>
            <person name="Dusch N."/>
            <person name="Eggeling L."/>
            <person name="Eikmanns B.J."/>
            <person name="Gaigalat L."/>
            <person name="Goesmann A."/>
            <person name="Hartmann M."/>
            <person name="Huthmacher K."/>
            <person name="Kraemer R."/>
            <person name="Linke B."/>
            <person name="McHardy A.C."/>
            <person name="Meyer F."/>
            <person name="Moeckel B."/>
            <person name="Pfefferle W."/>
            <person name="Puehler A."/>
            <person name="Rey D.A."/>
            <person name="Rueckert C."/>
            <person name="Rupp O."/>
            <person name="Sahm H."/>
            <person name="Wendisch V.F."/>
            <person name="Wiegraebe I."/>
            <person name="Tauch A."/>
        </authorList>
    </citation>
    <scope>NUCLEOTIDE SEQUENCE [LARGE SCALE GENOMIC DNA]</scope>
    <source>
        <strain>ATCC 13032 / DSM 20300 / JCM 1318 / BCRC 11384 / CCUG 27702 / LMG 3730 / NBRC 12168 / NCIMB 10025 / NRRL B-2784 / 534</strain>
    </source>
</reference>
<reference key="3">
    <citation type="journal article" date="2003" name="J. Biotechnol.">
        <title>Identification and characterization of the last two unknown genes, dapC and dapF, in the succinylase branch of the L-lysine biosynthesis of Corynebacterium glutamicum.</title>
        <authorList>
            <person name="Hartmann M."/>
            <person name="Tauch A."/>
            <person name="Eggeling L."/>
            <person name="Bathe B."/>
            <person name="Mockel B."/>
            <person name="Puhler A."/>
            <person name="Kalinowski J."/>
        </authorList>
    </citation>
    <scope>FUNCTION</scope>
    <scope>CATALYTIC ACTIVITY</scope>
    <scope>DISRUPTION PHENOTYPE</scope>
    <scope>PATHWAY</scope>
    <source>
        <strain>ATCC 13032 / DSM 20300 / JCM 1318 / BCRC 11384 / CCUG 27702 / LMG 3730 / NBRC 12168 / NCIMB 10025 / NRRL B-2784 / 534</strain>
    </source>
</reference>
<reference key="4">
    <citation type="submission" date="2016-10" db="PDB data bank">
        <title>Crystal structure of reduced DapF from Corynebacterium glutamicum.</title>
        <authorList>
            <person name="Sagong H.-Y."/>
            <person name="Kim K.-J."/>
        </authorList>
    </citation>
    <scope>X-RAY CRYSTALLOGRAPHY (2.00 ANGSTROMS)IN COMPLEX WITH SUBSTRATE</scope>
    <scope>ACTIVE SITE</scope>
    <scope>SUBUNIT</scope>
</reference>
<comment type="function">
    <text evidence="2">Catalyzes the stereoinversion of LL-2,6-diaminopimelate (L,L-DAP) to meso-diaminopimelate (meso-DAP), a precursor of L-lysine and an essential component of the bacterial peptidoglycan. Involved in the succinylase branch of the diaminopimelate biosynthesis.</text>
</comment>
<comment type="catalytic activity">
    <reaction evidence="2">
        <text>(2S,6S)-2,6-diaminopimelate = meso-2,6-diaminopimelate</text>
        <dbReference type="Rhea" id="RHEA:15393"/>
        <dbReference type="ChEBI" id="CHEBI:57609"/>
        <dbReference type="ChEBI" id="CHEBI:57791"/>
        <dbReference type="EC" id="5.1.1.7"/>
    </reaction>
</comment>
<comment type="pathway">
    <text evidence="2">Amino-acid biosynthesis; L-lysine biosynthesis via DAP pathway; DL-2,6-diaminopimelate from LL-2,6-diaminopimelate: step 1/1.</text>
</comment>
<comment type="subunit">
    <text evidence="3">Homodimer.</text>
</comment>
<comment type="subcellular location">
    <subcellularLocation>
        <location evidence="5">Cytoplasm</location>
    </subcellularLocation>
</comment>
<comment type="disruption phenotype">
    <text evidence="2">Cells lacking this gene are unable to transform L,L-DAP and show an impaired growth when supplied with low ammonium but high concentrations of carbon.</text>
</comment>
<comment type="similarity">
    <text evidence="5">Belongs to the diaminopimelate epimerase family.</text>
</comment>
<organism>
    <name type="scientific">Corynebacterium glutamicum (strain ATCC 13032 / DSM 20300 / JCM 1318 / BCRC 11384 / CCUG 27702 / LMG 3730 / NBRC 12168 / NCIMB 10025 / NRRL B-2784 / 534)</name>
    <dbReference type="NCBI Taxonomy" id="196627"/>
    <lineage>
        <taxon>Bacteria</taxon>
        <taxon>Bacillati</taxon>
        <taxon>Actinomycetota</taxon>
        <taxon>Actinomycetes</taxon>
        <taxon>Mycobacteriales</taxon>
        <taxon>Corynebacteriaceae</taxon>
        <taxon>Corynebacterium</taxon>
    </lineage>
</organism>
<gene>
    <name evidence="4" type="primary">dapF</name>
    <name type="ordered locus">Cgl1943</name>
    <name type="ordered locus">cg2129</name>
</gene>
<evidence type="ECO:0000255" key="1">
    <source>
        <dbReference type="HAMAP-Rule" id="MF_00197"/>
    </source>
</evidence>
<evidence type="ECO:0000269" key="2">
    <source>
    </source>
</evidence>
<evidence type="ECO:0000269" key="3">
    <source ref="4"/>
</evidence>
<evidence type="ECO:0000303" key="4">
    <source>
    </source>
</evidence>
<evidence type="ECO:0000305" key="5"/>
<evidence type="ECO:0000305" key="6">
    <source ref="4"/>
</evidence>
<evidence type="ECO:0007744" key="7">
    <source>
        <dbReference type="PDB" id="5M47"/>
    </source>
</evidence>
<evidence type="ECO:0007829" key="8">
    <source>
        <dbReference type="PDB" id="5H2G"/>
    </source>
</evidence>